<accession>P52753</accession>
<name>CRYP_CRYPA</name>
<comment type="function">
    <text evidence="6 13">Aerial growth, conidiation, and dispersal of filamentous fungi in the environment rely upon a capability of their secreting small amphipathic proteins called hydrophobins (HPBs) with low sequence identity. Class I can self-assemble into an outermost layer of rodlet bundles on aerial cell surfaces, conferring cellular hydrophobicity that supports fungal growth, development and dispersal; whereas Class II form highly ordered films at water-air interfaces through intermolecular interactions but contribute nothing to the rodlet structure (Probable). Cryparin is a class II hydrophobin that is the most abundant protein produced by this fungus when grown in liquid culture and that plays an essential role in the fitness of this important plant pathogen by facilitating the eruption of the fungal fruiting bodies through the bark of its host tree (PubMed:15879527).</text>
</comment>
<comment type="subunit">
    <text evidence="1">Homotetramer (By similarity). Further self-assembles to form highly ordered films at water-air interfaces through intermolecular interactions (By similarity).</text>
</comment>
<comment type="subcellular location">
    <subcellularLocation>
        <location evidence="3 6 8">Secreted</location>
    </subcellularLocation>
    <subcellularLocation>
        <location evidence="3 6">Secreted</location>
        <location evidence="3 6">Cell wall</location>
    </subcellularLocation>
</comment>
<comment type="developmental stage">
    <text evidence="6">When the fungus is growing on chestnut trees, cryparin is found only in the fungal fruiting body walls.</text>
</comment>
<comment type="induction">
    <text evidence="4 5 7 8 9 10 11">Highly expressed on day 2 and 3 after inoculation, a time when the fungus is in a rapid phase of growth. After a stationary phase on day 4, the expression decreases (PubMed:8112589). The fragment between positions -188 and the start codon is the minimal but sufficient promoter element for expression (PubMed:19238380). Expression is down-regulated by ther hypovirus CHV1 (PubMed:22438560, PubMed:8551574). Expression is also negatively regulated by the CPG-1 mediated signaling pathway (PubMed:12620256, PubMed:15590820). Finally, expression is also regulated by the MAPK pathways with the CWI and HOG1 pathways being stimulatory, whereas the pheromone-responsive MAPK being repressive (PubMed:29371804).</text>
</comment>
<comment type="disruption phenotype">
    <text evidence="6">Leads to easily wettable (nonhydrophobic) hyphae and impairs the ability to normally produce its fungal fruiting bodies (PubMed:15879527). Results also in stromal pustules that are unable to erupt through the bark of the tree (PubMed:15879527).</text>
</comment>
<comment type="similarity">
    <text evidence="13">Belongs to the cerato-ulmin hydrophobin family.</text>
</comment>
<proteinExistence type="evidence at protein level"/>
<reference key="1">
    <citation type="journal article" date="1994" name="Gene">
        <title>Virus-associated down-regulation of the gene encoding cryparin, an abundant cell-surface protein from the chestnut blight fungus, Cryphonectria parasitica.</title>
        <authorList>
            <person name="Zhang L."/>
            <person name="Villalon D."/>
            <person name="Sun Y."/>
            <person name="Kazmierczak P."/>
            <person name="van Alfen N.K."/>
        </authorList>
    </citation>
    <scope>NUCLEOTIDE SEQUENCE [GENOMIC DNA]</scope>
    <scope>PROTEIN SEQUENCE OF 23-73</scope>
    <scope>INDUCTION</scope>
    <source>
        <strain>155/2</strain>
    </source>
</reference>
<reference key="2">
    <citation type="journal article" date="1996" name="J. Virol.">
        <title>Transcriptional repression of specific host genes by the mycovirus Cryphonectria hypovirus 1.</title>
        <authorList>
            <person name="Kazmierczak P."/>
            <person name="Pfeiffer P."/>
            <person name="Zhang L."/>
            <person name="Van Alfen N.K."/>
        </authorList>
    </citation>
    <scope>INDUCTION</scope>
</reference>
<reference key="3">
    <citation type="journal article" date="1999" name="Appl. Environ. Microbiol.">
        <title>Secretion of cryparin, a fungal hydrophobin.</title>
        <authorList>
            <person name="McCabe P.M."/>
            <person name="Van Alfen N.K."/>
        </authorList>
    </citation>
    <scope>SUBCELLULAR LOCATION</scope>
</reference>
<reference key="4">
    <citation type="journal article" date="2003" name="Fungal Genet. Biol.">
        <title>Constitutively activated Galpha negatively regulates virulence, reproduction and hydrophobin gene expression in the chestnut blight fungus Cryphonectria parasitica.</title>
        <authorList>
            <person name="Segers G.C."/>
            <person name="Nuss D.L."/>
        </authorList>
    </citation>
    <scope>INDUCTION</scope>
</reference>
<reference key="5">
    <citation type="journal article" date="2004" name="Eukaryot. Cell">
        <title>Evidence for a role of the regulator of G-protein signaling protein CPRGS-1 in Galpha subunit CPG-1-mediated regulation of fungal virulence, conidiation, and hydrophobin synthesis in the chestnut blight fungus Cryphonectria parasitica.</title>
        <authorList>
            <person name="Segers G.C."/>
            <person name="Regier J.C."/>
            <person name="Nuss D.L."/>
        </authorList>
    </citation>
    <scope>INDUCTION</scope>
</reference>
<reference key="6">
    <citation type="journal article" date="2005" name="Eukaryot. Cell">
        <title>A Hydrophobin of the chestnut blight fungus, Cryphonectria parasitica, is required for stromal pustule eruption.</title>
        <authorList>
            <person name="Kazmierczak P."/>
            <person name="Kim D.H."/>
            <person name="Turina M."/>
            <person name="Van Alfen N.K."/>
        </authorList>
    </citation>
    <scope>FUNCTION</scope>
    <scope>DISRUPTION PHENOTYPE</scope>
    <scope>DEVELOPMENTAL STAGE</scope>
</reference>
<reference key="7">
    <citation type="journal article" date="2009" name="Appl. Microbiol. Biotechnol.">
        <title>Assessment of the core cryparin promoter from Cryphonectria parasitica for heterologous expression in filamentous fungi.</title>
        <authorList>
            <person name="Kwon B.R."/>
            <person name="Kim M.J."/>
            <person name="Park J.A."/>
            <person name="Chung H.J."/>
            <person name="Kim J.M."/>
            <person name="Park S.M."/>
            <person name="Yun S.H."/>
            <person name="Yang M.S."/>
            <person name="Kim D.H."/>
        </authorList>
    </citation>
    <scope>INDUCTION</scope>
</reference>
<reference key="8">
    <citation type="journal article" date="2012" name="J. Virol.">
        <title>The mycovirus CHV1 disrupts secretion of a developmentally regulated protein in Cryphonectria parasitica.</title>
        <authorList>
            <person name="Kazmierczak P."/>
            <person name="McCabe P."/>
            <person name="Turina M."/>
            <person name="Jacob-Wilk D."/>
            <person name="Van Alfen N.K."/>
        </authorList>
    </citation>
    <scope>INDUCTION</scope>
    <scope>SUBCELLULAR LOCATION</scope>
</reference>
<reference key="9">
    <citation type="journal article" date="2017" name="Mycobiology">
        <title>Role of MAPK Signaling Pathways in Regulating the Hydrophobin Cryparin in the Chestnut Blight Fungus Cryphonectria parasitica.</title>
        <authorList>
            <person name="So K.K."/>
            <person name="Kim D.H."/>
        </authorList>
    </citation>
    <scope>INDUCTION</scope>
</reference>
<protein>
    <recommendedName>
        <fullName evidence="12">Class II hydrophobin CRP</fullName>
    </recommendedName>
    <alternativeName>
        <fullName evidence="12">Cryparin</fullName>
    </alternativeName>
</protein>
<evidence type="ECO:0000250" key="1">
    <source>
        <dbReference type="UniProtKB" id="P52754"/>
    </source>
</evidence>
<evidence type="ECO:0000256" key="2">
    <source>
        <dbReference type="SAM" id="MobiDB-lite"/>
    </source>
</evidence>
<evidence type="ECO:0000269" key="3">
    <source>
    </source>
</evidence>
<evidence type="ECO:0000269" key="4">
    <source>
    </source>
</evidence>
<evidence type="ECO:0000269" key="5">
    <source>
    </source>
</evidence>
<evidence type="ECO:0000269" key="6">
    <source>
    </source>
</evidence>
<evidence type="ECO:0000269" key="7">
    <source>
    </source>
</evidence>
<evidence type="ECO:0000269" key="8">
    <source>
    </source>
</evidence>
<evidence type="ECO:0000269" key="9">
    <source>
    </source>
</evidence>
<evidence type="ECO:0000269" key="10">
    <source>
    </source>
</evidence>
<evidence type="ECO:0000269" key="11">
    <source>
    </source>
</evidence>
<evidence type="ECO:0000303" key="12">
    <source>
    </source>
</evidence>
<evidence type="ECO:0000305" key="13"/>
<gene>
    <name evidence="12" type="primary">CRP</name>
</gene>
<sequence>MQFSIIAISFLASLAMASPAKRGGGGGGSGSGSGSGSGSGSGGGSTTYTACSSTLYSEAQCCATDVLGVADLDCETVPETPTSASSFESICATSGRDAKCCTIPLLGQALLCQDPVGL</sequence>
<feature type="signal peptide" evidence="10">
    <location>
        <begin position="1"/>
        <end position="22"/>
    </location>
</feature>
<feature type="chain" id="PRO_0000013518" description="Class II hydrophobin CRP">
    <location>
        <begin position="23"/>
        <end position="118"/>
    </location>
</feature>
<feature type="repeat" description="1">
    <location>
        <begin position="29"/>
        <end position="30"/>
    </location>
</feature>
<feature type="repeat" description="2">
    <location>
        <begin position="31"/>
        <end position="32"/>
    </location>
</feature>
<feature type="repeat" description="3">
    <location>
        <begin position="33"/>
        <end position="34"/>
    </location>
</feature>
<feature type="repeat" description="4">
    <location>
        <begin position="35"/>
        <end position="36"/>
    </location>
</feature>
<feature type="repeat" description="5">
    <location>
        <begin position="37"/>
        <end position="38"/>
    </location>
</feature>
<feature type="repeat" description="6">
    <location>
        <begin position="39"/>
        <end position="40"/>
    </location>
</feature>
<feature type="repeat" description="7">
    <location>
        <begin position="41"/>
        <end position="42"/>
    </location>
</feature>
<feature type="region of interest" description="Disordered" evidence="2">
    <location>
        <begin position="20"/>
        <end position="46"/>
    </location>
</feature>
<feature type="region of interest" description="7 X 2 AA tandem repeats of S-G">
    <location>
        <begin position="29"/>
        <end position="42"/>
    </location>
</feature>
<feature type="compositionally biased region" description="Gly residues" evidence="2">
    <location>
        <begin position="22"/>
        <end position="45"/>
    </location>
</feature>
<feature type="disulfide bond" evidence="1">
    <location>
        <begin position="51"/>
        <end position="100"/>
    </location>
</feature>
<feature type="disulfide bond" evidence="1">
    <location>
        <begin position="61"/>
        <end position="91"/>
    </location>
</feature>
<feature type="disulfide bond" evidence="1">
    <location>
        <begin position="62"/>
        <end position="74"/>
    </location>
</feature>
<feature type="disulfide bond" evidence="1">
    <location>
        <begin position="101"/>
        <end position="112"/>
    </location>
</feature>
<keyword id="KW-0134">Cell wall</keyword>
<keyword id="KW-0903">Direct protein sequencing</keyword>
<keyword id="KW-1015">Disulfide bond</keyword>
<keyword id="KW-0677">Repeat</keyword>
<keyword id="KW-0964">Secreted</keyword>
<keyword id="KW-0732">Signal</keyword>
<dbReference type="EMBL" id="L09559">
    <property type="protein sequence ID" value="AAA19638.1"/>
    <property type="molecule type" value="Unassigned_DNA"/>
</dbReference>
<dbReference type="SMR" id="P52753"/>
<dbReference type="OMA" id="LYTPQCC"/>
<dbReference type="GO" id="GO:0005576">
    <property type="term" value="C:extracellular region"/>
    <property type="evidence" value="ECO:0007669"/>
    <property type="project" value="UniProtKB-SubCell"/>
</dbReference>
<dbReference type="CDD" id="cd23508">
    <property type="entry name" value="hydrophobin_II"/>
    <property type="match status" value="1"/>
</dbReference>
<dbReference type="Gene3D" id="3.20.120.10">
    <property type="entry name" value="Hydrophobin"/>
    <property type="match status" value="1"/>
</dbReference>
<dbReference type="InterPro" id="IPR010636">
    <property type="entry name" value="Cerato-ulmin_hydrophobin"/>
</dbReference>
<dbReference type="InterPro" id="IPR036686">
    <property type="entry name" value="Hydrophobin_sf"/>
</dbReference>
<dbReference type="PANTHER" id="PTHR42341">
    <property type="entry name" value="HYDROPHOBIN"/>
    <property type="match status" value="1"/>
</dbReference>
<dbReference type="PANTHER" id="PTHR42341:SF1">
    <property type="entry name" value="HYDROPHOBIN"/>
    <property type="match status" value="1"/>
</dbReference>
<dbReference type="Pfam" id="PF06766">
    <property type="entry name" value="Hydrophobin_2"/>
    <property type="match status" value="1"/>
</dbReference>
<dbReference type="SUPFAM" id="SSF101751">
    <property type="entry name" value="Hydrophobin II, HfbII"/>
    <property type="match status" value="1"/>
</dbReference>
<organism>
    <name type="scientific">Cryphonectria parasitica</name>
    <name type="common">Chestnut blight fungus</name>
    <name type="synonym">Endothia parasitica</name>
    <dbReference type="NCBI Taxonomy" id="5116"/>
    <lineage>
        <taxon>Eukaryota</taxon>
        <taxon>Fungi</taxon>
        <taxon>Dikarya</taxon>
        <taxon>Ascomycota</taxon>
        <taxon>Pezizomycotina</taxon>
        <taxon>Sordariomycetes</taxon>
        <taxon>Sordariomycetidae</taxon>
        <taxon>Diaporthales</taxon>
        <taxon>Cryphonectriaceae</taxon>
        <taxon>Cryphonectria-Endothia species complex</taxon>
        <taxon>Cryphonectria</taxon>
    </lineage>
</organism>